<protein>
    <recommendedName>
        <fullName evidence="1">Elongation factor P</fullName>
        <shortName evidence="1">EF-P</shortName>
    </recommendedName>
</protein>
<evidence type="ECO:0000255" key="1">
    <source>
        <dbReference type="HAMAP-Rule" id="MF_00141"/>
    </source>
</evidence>
<organism>
    <name type="scientific">Synechococcus sp. (strain CC9605)</name>
    <dbReference type="NCBI Taxonomy" id="110662"/>
    <lineage>
        <taxon>Bacteria</taxon>
        <taxon>Bacillati</taxon>
        <taxon>Cyanobacteriota</taxon>
        <taxon>Cyanophyceae</taxon>
        <taxon>Synechococcales</taxon>
        <taxon>Synechococcaceae</taxon>
        <taxon>Synechococcus</taxon>
    </lineage>
</organism>
<feature type="chain" id="PRO_1000010888" description="Elongation factor P">
    <location>
        <begin position="1"/>
        <end position="187"/>
    </location>
</feature>
<proteinExistence type="inferred from homology"/>
<keyword id="KW-0963">Cytoplasm</keyword>
<keyword id="KW-0251">Elongation factor</keyword>
<keyword id="KW-0648">Protein biosynthesis</keyword>
<sequence length="187" mass="20653">MISSNDFRTGTTIEIDGAVWRVVEFLHVKPGKGSAFVRTKLKAVKSGNVVEKTFRAGEMLPQAMLEKSSLQHTYMEGEDYVFMDMATYEETRLSADQIGESRKYLKEGMEVNVVSWNDTPLEVELPNSVVLEIKETDPGVKGDTATGGTKPAILETGAQVMVPLFLSVGEKIKVDTRNDSYLGRENG</sequence>
<accession>Q3ANM0</accession>
<name>EFP_SYNSC</name>
<reference key="1">
    <citation type="submission" date="2005-07" db="EMBL/GenBank/DDBJ databases">
        <title>Complete sequence of Synechococcus sp. CC9605.</title>
        <authorList>
            <consortium name="US DOE Joint Genome Institute"/>
            <person name="Copeland A."/>
            <person name="Lucas S."/>
            <person name="Lapidus A."/>
            <person name="Barry K."/>
            <person name="Detter J.C."/>
            <person name="Glavina T."/>
            <person name="Hammon N."/>
            <person name="Israni S."/>
            <person name="Pitluck S."/>
            <person name="Schmutz J."/>
            <person name="Martinez M."/>
            <person name="Larimer F."/>
            <person name="Land M."/>
            <person name="Kyrpides N."/>
            <person name="Ivanova N."/>
            <person name="Richardson P."/>
        </authorList>
    </citation>
    <scope>NUCLEOTIDE SEQUENCE [LARGE SCALE GENOMIC DNA]</scope>
    <source>
        <strain>CC9605</strain>
    </source>
</reference>
<gene>
    <name evidence="1" type="primary">efp</name>
    <name type="ordered locus">Syncc9605_0033</name>
</gene>
<dbReference type="EMBL" id="CP000110">
    <property type="protein sequence ID" value="ABB33812.1"/>
    <property type="molecule type" value="Genomic_DNA"/>
</dbReference>
<dbReference type="RefSeq" id="WP_011363074.1">
    <property type="nucleotide sequence ID" value="NC_007516.1"/>
</dbReference>
<dbReference type="SMR" id="Q3ANM0"/>
<dbReference type="STRING" id="110662.Syncc9605_0033"/>
<dbReference type="KEGG" id="syd:Syncc9605_0033"/>
<dbReference type="eggNOG" id="COG0231">
    <property type="taxonomic scope" value="Bacteria"/>
</dbReference>
<dbReference type="HOGENOM" id="CLU_074944_0_1_3"/>
<dbReference type="OrthoDB" id="9801844at2"/>
<dbReference type="UniPathway" id="UPA00345"/>
<dbReference type="GO" id="GO:0005737">
    <property type="term" value="C:cytoplasm"/>
    <property type="evidence" value="ECO:0007669"/>
    <property type="project" value="UniProtKB-SubCell"/>
</dbReference>
<dbReference type="GO" id="GO:0003746">
    <property type="term" value="F:translation elongation factor activity"/>
    <property type="evidence" value="ECO:0007669"/>
    <property type="project" value="UniProtKB-UniRule"/>
</dbReference>
<dbReference type="GO" id="GO:0043043">
    <property type="term" value="P:peptide biosynthetic process"/>
    <property type="evidence" value="ECO:0007669"/>
    <property type="project" value="InterPro"/>
</dbReference>
<dbReference type="CDD" id="cd04470">
    <property type="entry name" value="S1_EF-P_repeat_1"/>
    <property type="match status" value="1"/>
</dbReference>
<dbReference type="CDD" id="cd05794">
    <property type="entry name" value="S1_EF-P_repeat_2"/>
    <property type="match status" value="1"/>
</dbReference>
<dbReference type="FunFam" id="2.30.30.30:FF:000003">
    <property type="entry name" value="Elongation factor P"/>
    <property type="match status" value="1"/>
</dbReference>
<dbReference type="FunFam" id="2.40.50.140:FF:000004">
    <property type="entry name" value="Elongation factor P"/>
    <property type="match status" value="1"/>
</dbReference>
<dbReference type="FunFam" id="2.40.50.140:FF:000009">
    <property type="entry name" value="Elongation factor P"/>
    <property type="match status" value="1"/>
</dbReference>
<dbReference type="Gene3D" id="2.30.30.30">
    <property type="match status" value="1"/>
</dbReference>
<dbReference type="Gene3D" id="2.40.50.140">
    <property type="entry name" value="Nucleic acid-binding proteins"/>
    <property type="match status" value="2"/>
</dbReference>
<dbReference type="HAMAP" id="MF_00141">
    <property type="entry name" value="EF_P"/>
    <property type="match status" value="1"/>
</dbReference>
<dbReference type="InterPro" id="IPR015365">
    <property type="entry name" value="Elong-fact-P_C"/>
</dbReference>
<dbReference type="InterPro" id="IPR012340">
    <property type="entry name" value="NA-bd_OB-fold"/>
</dbReference>
<dbReference type="InterPro" id="IPR014722">
    <property type="entry name" value="Rib_uL2_dom2"/>
</dbReference>
<dbReference type="InterPro" id="IPR020599">
    <property type="entry name" value="Transl_elong_fac_P/YeiP"/>
</dbReference>
<dbReference type="InterPro" id="IPR013185">
    <property type="entry name" value="Transl_elong_KOW-like"/>
</dbReference>
<dbReference type="InterPro" id="IPR001059">
    <property type="entry name" value="Transl_elong_P/YeiP_cen"/>
</dbReference>
<dbReference type="InterPro" id="IPR013852">
    <property type="entry name" value="Transl_elong_P/YeiP_CS"/>
</dbReference>
<dbReference type="InterPro" id="IPR011768">
    <property type="entry name" value="Transl_elongation_fac_P"/>
</dbReference>
<dbReference type="InterPro" id="IPR008991">
    <property type="entry name" value="Translation_prot_SH3-like_sf"/>
</dbReference>
<dbReference type="NCBIfam" id="TIGR00038">
    <property type="entry name" value="efp"/>
    <property type="match status" value="1"/>
</dbReference>
<dbReference type="NCBIfam" id="NF001810">
    <property type="entry name" value="PRK00529.1"/>
    <property type="match status" value="1"/>
</dbReference>
<dbReference type="PANTHER" id="PTHR30053">
    <property type="entry name" value="ELONGATION FACTOR P"/>
    <property type="match status" value="1"/>
</dbReference>
<dbReference type="PANTHER" id="PTHR30053:SF12">
    <property type="entry name" value="ELONGATION FACTOR P (EF-P) FAMILY PROTEIN"/>
    <property type="match status" value="1"/>
</dbReference>
<dbReference type="Pfam" id="PF01132">
    <property type="entry name" value="EFP"/>
    <property type="match status" value="1"/>
</dbReference>
<dbReference type="Pfam" id="PF08207">
    <property type="entry name" value="EFP_N"/>
    <property type="match status" value="1"/>
</dbReference>
<dbReference type="Pfam" id="PF09285">
    <property type="entry name" value="Elong-fact-P_C"/>
    <property type="match status" value="1"/>
</dbReference>
<dbReference type="PIRSF" id="PIRSF005901">
    <property type="entry name" value="EF-P"/>
    <property type="match status" value="1"/>
</dbReference>
<dbReference type="SMART" id="SM01185">
    <property type="entry name" value="EFP"/>
    <property type="match status" value="1"/>
</dbReference>
<dbReference type="SMART" id="SM00841">
    <property type="entry name" value="Elong-fact-P_C"/>
    <property type="match status" value="1"/>
</dbReference>
<dbReference type="SUPFAM" id="SSF50249">
    <property type="entry name" value="Nucleic acid-binding proteins"/>
    <property type="match status" value="2"/>
</dbReference>
<dbReference type="SUPFAM" id="SSF50104">
    <property type="entry name" value="Translation proteins SH3-like domain"/>
    <property type="match status" value="1"/>
</dbReference>
<dbReference type="PROSITE" id="PS01275">
    <property type="entry name" value="EFP"/>
    <property type="match status" value="1"/>
</dbReference>
<comment type="function">
    <text evidence="1">Involved in peptide bond synthesis. Stimulates efficient translation and peptide-bond synthesis on native or reconstituted 70S ribosomes in vitro. Probably functions indirectly by altering the affinity of the ribosome for aminoacyl-tRNA, thus increasing their reactivity as acceptors for peptidyl transferase.</text>
</comment>
<comment type="pathway">
    <text evidence="1">Protein biosynthesis; polypeptide chain elongation.</text>
</comment>
<comment type="subcellular location">
    <subcellularLocation>
        <location evidence="1">Cytoplasm</location>
    </subcellularLocation>
</comment>
<comment type="similarity">
    <text evidence="1">Belongs to the elongation factor P family.</text>
</comment>